<name>RL15_AZOSB</name>
<keyword id="KW-1185">Reference proteome</keyword>
<keyword id="KW-0687">Ribonucleoprotein</keyword>
<keyword id="KW-0689">Ribosomal protein</keyword>
<keyword id="KW-0694">RNA-binding</keyword>
<keyword id="KW-0699">rRNA-binding</keyword>
<organism>
    <name type="scientific">Azoarcus sp. (strain BH72)</name>
    <dbReference type="NCBI Taxonomy" id="418699"/>
    <lineage>
        <taxon>Bacteria</taxon>
        <taxon>Pseudomonadati</taxon>
        <taxon>Pseudomonadota</taxon>
        <taxon>Betaproteobacteria</taxon>
        <taxon>Rhodocyclales</taxon>
        <taxon>Zoogloeaceae</taxon>
        <taxon>Azoarcus</taxon>
    </lineage>
</organism>
<dbReference type="EMBL" id="AM406670">
    <property type="protein sequence ID" value="CAL96014.1"/>
    <property type="molecule type" value="Genomic_DNA"/>
</dbReference>
<dbReference type="RefSeq" id="WP_011767121.1">
    <property type="nucleotide sequence ID" value="NC_008702.1"/>
</dbReference>
<dbReference type="SMR" id="A1KB08"/>
<dbReference type="STRING" id="62928.azo3398"/>
<dbReference type="KEGG" id="aoa:dqs_3537"/>
<dbReference type="KEGG" id="azo:azo3398"/>
<dbReference type="eggNOG" id="COG0200">
    <property type="taxonomic scope" value="Bacteria"/>
</dbReference>
<dbReference type="HOGENOM" id="CLU_055188_4_2_4"/>
<dbReference type="OrthoDB" id="9810293at2"/>
<dbReference type="Proteomes" id="UP000002588">
    <property type="component" value="Chromosome"/>
</dbReference>
<dbReference type="GO" id="GO:0022625">
    <property type="term" value="C:cytosolic large ribosomal subunit"/>
    <property type="evidence" value="ECO:0007669"/>
    <property type="project" value="TreeGrafter"/>
</dbReference>
<dbReference type="GO" id="GO:0019843">
    <property type="term" value="F:rRNA binding"/>
    <property type="evidence" value="ECO:0007669"/>
    <property type="project" value="UniProtKB-UniRule"/>
</dbReference>
<dbReference type="GO" id="GO:0003735">
    <property type="term" value="F:structural constituent of ribosome"/>
    <property type="evidence" value="ECO:0007669"/>
    <property type="project" value="InterPro"/>
</dbReference>
<dbReference type="GO" id="GO:0006412">
    <property type="term" value="P:translation"/>
    <property type="evidence" value="ECO:0007669"/>
    <property type="project" value="UniProtKB-UniRule"/>
</dbReference>
<dbReference type="Gene3D" id="3.100.10.10">
    <property type="match status" value="1"/>
</dbReference>
<dbReference type="HAMAP" id="MF_01341">
    <property type="entry name" value="Ribosomal_uL15"/>
    <property type="match status" value="1"/>
</dbReference>
<dbReference type="InterPro" id="IPR030878">
    <property type="entry name" value="Ribosomal_uL15"/>
</dbReference>
<dbReference type="InterPro" id="IPR021131">
    <property type="entry name" value="Ribosomal_uL15/eL18"/>
</dbReference>
<dbReference type="InterPro" id="IPR036227">
    <property type="entry name" value="Ribosomal_uL15/eL18_sf"/>
</dbReference>
<dbReference type="InterPro" id="IPR005749">
    <property type="entry name" value="Ribosomal_uL15_bac-type"/>
</dbReference>
<dbReference type="InterPro" id="IPR001196">
    <property type="entry name" value="Ribosomal_uL15_CS"/>
</dbReference>
<dbReference type="NCBIfam" id="TIGR01071">
    <property type="entry name" value="rplO_bact"/>
    <property type="match status" value="1"/>
</dbReference>
<dbReference type="PANTHER" id="PTHR12934">
    <property type="entry name" value="50S RIBOSOMAL PROTEIN L15"/>
    <property type="match status" value="1"/>
</dbReference>
<dbReference type="PANTHER" id="PTHR12934:SF11">
    <property type="entry name" value="LARGE RIBOSOMAL SUBUNIT PROTEIN UL15M"/>
    <property type="match status" value="1"/>
</dbReference>
<dbReference type="Pfam" id="PF00828">
    <property type="entry name" value="Ribosomal_L27A"/>
    <property type="match status" value="1"/>
</dbReference>
<dbReference type="SUPFAM" id="SSF52080">
    <property type="entry name" value="Ribosomal proteins L15p and L18e"/>
    <property type="match status" value="1"/>
</dbReference>
<dbReference type="PROSITE" id="PS00475">
    <property type="entry name" value="RIBOSOMAL_L15"/>
    <property type="match status" value="1"/>
</dbReference>
<comment type="function">
    <text evidence="1">Binds to the 23S rRNA.</text>
</comment>
<comment type="subunit">
    <text evidence="1">Part of the 50S ribosomal subunit.</text>
</comment>
<comment type="similarity">
    <text evidence="1">Belongs to the universal ribosomal protein uL15 family.</text>
</comment>
<proteinExistence type="inferred from homology"/>
<protein>
    <recommendedName>
        <fullName evidence="1">Large ribosomal subunit protein uL15</fullName>
    </recommendedName>
    <alternativeName>
        <fullName evidence="3">50S ribosomal protein L15</fullName>
    </alternativeName>
</protein>
<gene>
    <name evidence="1" type="primary">rplO</name>
    <name type="ordered locus">azo3398</name>
</gene>
<accession>A1KB08</accession>
<sequence length="144" mass="14642">MRLNTIKPGAGSKSAGKRVGRGIGSGLGKTCGRGHKGQKSRAGGFHKVGFEGGQMPLQRRLPKRGFVSLTRGRCAEVRLSELAQLPVEDVDLLVLKQAGVIAADALSAKVVLSGAISKKVVLRGIAATAGARAAIEAAGGSCGE</sequence>
<reference key="1">
    <citation type="journal article" date="2006" name="Nat. Biotechnol.">
        <title>Complete genome of the mutualistic, N2-fixing grass endophyte Azoarcus sp. strain BH72.</title>
        <authorList>
            <person name="Krause A."/>
            <person name="Ramakumar A."/>
            <person name="Bartels D."/>
            <person name="Battistoni F."/>
            <person name="Bekel T."/>
            <person name="Boch J."/>
            <person name="Boehm M."/>
            <person name="Friedrich F."/>
            <person name="Hurek T."/>
            <person name="Krause L."/>
            <person name="Linke B."/>
            <person name="McHardy A.C."/>
            <person name="Sarkar A."/>
            <person name="Schneiker S."/>
            <person name="Syed A.A."/>
            <person name="Thauer R."/>
            <person name="Vorhoelter F.-J."/>
            <person name="Weidner S."/>
            <person name="Puehler A."/>
            <person name="Reinhold-Hurek B."/>
            <person name="Kaiser O."/>
            <person name="Goesmann A."/>
        </authorList>
    </citation>
    <scope>NUCLEOTIDE SEQUENCE [LARGE SCALE GENOMIC DNA]</scope>
    <source>
        <strain>BH72</strain>
    </source>
</reference>
<feature type="chain" id="PRO_1000054424" description="Large ribosomal subunit protein uL15">
    <location>
        <begin position="1"/>
        <end position="144"/>
    </location>
</feature>
<feature type="region of interest" description="Disordered" evidence="2">
    <location>
        <begin position="1"/>
        <end position="51"/>
    </location>
</feature>
<feature type="compositionally biased region" description="Gly residues" evidence="2">
    <location>
        <begin position="21"/>
        <end position="31"/>
    </location>
</feature>
<evidence type="ECO:0000255" key="1">
    <source>
        <dbReference type="HAMAP-Rule" id="MF_01341"/>
    </source>
</evidence>
<evidence type="ECO:0000256" key="2">
    <source>
        <dbReference type="SAM" id="MobiDB-lite"/>
    </source>
</evidence>
<evidence type="ECO:0000305" key="3"/>